<feature type="chain" id="PRO_0000081596" description="Serine/arginine (SR)-type shuttling mRNA binding protein GBP2">
    <location>
        <begin position="1"/>
        <end position="427"/>
    </location>
</feature>
<feature type="domain" description="RRM 1" evidence="1">
    <location>
        <begin position="122"/>
        <end position="198"/>
    </location>
</feature>
<feature type="domain" description="RRM 2" evidence="1">
    <location>
        <begin position="219"/>
        <end position="296"/>
    </location>
</feature>
<feature type="domain" description="RRM 3" evidence="1">
    <location>
        <begin position="349"/>
        <end position="426"/>
    </location>
</feature>
<feature type="region of interest" description="Disordered" evidence="2">
    <location>
        <begin position="1"/>
        <end position="101"/>
    </location>
</feature>
<feature type="region of interest" description="Disordered" evidence="2">
    <location>
        <begin position="300"/>
        <end position="319"/>
    </location>
</feature>
<feature type="compositionally biased region" description="Basic and acidic residues" evidence="2">
    <location>
        <begin position="22"/>
        <end position="32"/>
    </location>
</feature>
<feature type="compositionally biased region" description="Low complexity" evidence="2">
    <location>
        <begin position="35"/>
        <end position="44"/>
    </location>
</feature>
<feature type="compositionally biased region" description="Basic and acidic residues" evidence="2">
    <location>
        <begin position="50"/>
        <end position="60"/>
    </location>
</feature>
<feature type="compositionally biased region" description="Basic and acidic residues" evidence="2">
    <location>
        <begin position="300"/>
        <end position="317"/>
    </location>
</feature>
<feature type="modified residue" description="Phosphoserine" evidence="12">
    <location>
        <position position="24"/>
    </location>
</feature>
<feature type="modified residue" description="Phosphothreonine" evidence="22">
    <location>
        <position position="130"/>
    </location>
</feature>
<feature type="mutagenesis site" description="Shifts localization of the protein to the cytoplasm at steady state." evidence="6">
    <original>S</original>
    <variation>A</variation>
    <location>
        <position position="15"/>
    </location>
</feature>
<feature type="helix" evidence="23">
    <location>
        <begin position="332"/>
        <end position="336"/>
    </location>
</feature>
<feature type="turn" evidence="23">
    <location>
        <begin position="337"/>
        <end position="340"/>
    </location>
</feature>
<feature type="strand" evidence="23">
    <location>
        <begin position="349"/>
        <end position="354"/>
    </location>
</feature>
<feature type="helix" evidence="23">
    <location>
        <begin position="362"/>
        <end position="364"/>
    </location>
</feature>
<feature type="helix" evidence="23">
    <location>
        <begin position="365"/>
        <end position="368"/>
    </location>
</feature>
<feature type="turn" evidence="23">
    <location>
        <begin position="370"/>
        <end position="372"/>
    </location>
</feature>
<feature type="strand" evidence="23">
    <location>
        <begin position="375"/>
        <end position="380"/>
    </location>
</feature>
<feature type="strand" evidence="23">
    <location>
        <begin position="390"/>
        <end position="398"/>
    </location>
</feature>
<feature type="helix" evidence="23">
    <location>
        <begin position="399"/>
        <end position="408"/>
    </location>
</feature>
<feature type="strand" evidence="23">
    <location>
        <begin position="420"/>
        <end position="423"/>
    </location>
</feature>
<protein>
    <recommendedName>
        <fullName evidence="19">Serine/arginine (SR)-type shuttling mRNA binding protein GBP2</fullName>
    </recommendedName>
    <alternativeName>
        <fullName evidence="16">Polyadenylate-binding protein GBP2</fullName>
    </alternativeName>
    <alternativeName>
        <fullName evidence="17">RAP1 localization factor 6</fullName>
    </alternativeName>
    <alternativeName>
        <fullName evidence="19">Single-strand telomeric DNA-binding protein GBP2</fullName>
        <shortName evidence="18">G-strand-binding protein 2</shortName>
    </alternativeName>
</protein>
<name>GBP2_YEAST</name>
<evidence type="ECO:0000255" key="1">
    <source>
        <dbReference type="PROSITE-ProRule" id="PRU00176"/>
    </source>
</evidence>
<evidence type="ECO:0000256" key="2">
    <source>
        <dbReference type="SAM" id="MobiDB-lite"/>
    </source>
</evidence>
<evidence type="ECO:0000269" key="3">
    <source>
    </source>
</evidence>
<evidence type="ECO:0000269" key="4">
    <source>
    </source>
</evidence>
<evidence type="ECO:0000269" key="5">
    <source>
    </source>
</evidence>
<evidence type="ECO:0000269" key="6">
    <source>
    </source>
</evidence>
<evidence type="ECO:0000269" key="7">
    <source>
    </source>
</evidence>
<evidence type="ECO:0000269" key="8">
    <source>
    </source>
</evidence>
<evidence type="ECO:0000269" key="9">
    <source>
    </source>
</evidence>
<evidence type="ECO:0000269" key="10">
    <source>
    </source>
</evidence>
<evidence type="ECO:0000269" key="11">
    <source>
    </source>
</evidence>
<evidence type="ECO:0000269" key="12">
    <source>
    </source>
</evidence>
<evidence type="ECO:0000269" key="13">
    <source>
    </source>
</evidence>
<evidence type="ECO:0000269" key="14">
    <source>
    </source>
</evidence>
<evidence type="ECO:0000269" key="15">
    <source>
    </source>
</evidence>
<evidence type="ECO:0000303" key="16">
    <source>
    </source>
</evidence>
<evidence type="ECO:0000303" key="17">
    <source>
    </source>
</evidence>
<evidence type="ECO:0000303" key="18">
    <source>
    </source>
</evidence>
<evidence type="ECO:0000305" key="19"/>
<evidence type="ECO:0000305" key="20">
    <source>
    </source>
</evidence>
<evidence type="ECO:0007744" key="21">
    <source>
        <dbReference type="PDB" id="2MZQ"/>
    </source>
</evidence>
<evidence type="ECO:0007744" key="22">
    <source>
    </source>
</evidence>
<evidence type="ECO:0007829" key="23">
    <source>
        <dbReference type="PDB" id="2MZQ"/>
    </source>
</evidence>
<sequence length="427" mass="48729">MERELGMYGNDRSRSRSPVRRRLSDDRDRYDDYNDSSSNNGNGSRRQRRDRGSRFNDRYDQSYGGSRYHDDRNWPPRRGGRGRGGSRSFRGGRGGGRGRTLGPIVERDLERQFDATKRNFENSIFVRNLTFDCTPEDLKELFGTVGEVVEADIITSKGHHRGMGTVEFTKNESVQDAISKFDGALFMDRKLMVRQDNPPPEAAKEFSKKATREEIDNGFEVFIINLPYSMNWQSLKDMFKECGHVLRADVELDFNGFSRGFGSVIYPTEDEMIRAIDTFNGMEVEGRVLEVREGRFNKRKNNDRYNQRREDLEDTRGTEPGLAQDAAVHIDETAAKFTEGVNPGGDRNCFIYCSNLPFSTARSDLFDLFGPIGKINNAELKPQENGQPTGVAVVEYENLVDADFCIQKLNNYNYGGCSLQISYARRD</sequence>
<dbReference type="EMBL" id="X59720">
    <property type="protein sequence ID" value="CAA42348.1"/>
    <property type="molecule type" value="Genomic_DNA"/>
</dbReference>
<dbReference type="EMBL" id="AY692807">
    <property type="protein sequence ID" value="AAT92826.1"/>
    <property type="molecule type" value="Genomic_DNA"/>
</dbReference>
<dbReference type="EMBL" id="BK006937">
    <property type="protein sequence ID" value="DAA07470.1"/>
    <property type="molecule type" value="Genomic_DNA"/>
</dbReference>
<dbReference type="PIR" id="S19338">
    <property type="entry name" value="S19338"/>
</dbReference>
<dbReference type="RefSeq" id="NP_009916.1">
    <property type="nucleotide sequence ID" value="NM_001178660.1"/>
</dbReference>
<dbReference type="PDB" id="2MZQ">
    <property type="method" value="NMR"/>
    <property type="chains" value="A=329-427"/>
</dbReference>
<dbReference type="PDBsum" id="2MZQ"/>
<dbReference type="SMR" id="P25555"/>
<dbReference type="BioGRID" id="30970">
    <property type="interactions" value="236"/>
</dbReference>
<dbReference type="DIP" id="DIP-2735N"/>
<dbReference type="FunCoup" id="P25555">
    <property type="interactions" value="688"/>
</dbReference>
<dbReference type="IntAct" id="P25555">
    <property type="interactions" value="58"/>
</dbReference>
<dbReference type="MINT" id="P25555"/>
<dbReference type="STRING" id="4932.YCL011C"/>
<dbReference type="iPTMnet" id="P25555"/>
<dbReference type="PaxDb" id="4932-YCL011C"/>
<dbReference type="PeptideAtlas" id="P25555"/>
<dbReference type="EnsemblFungi" id="YCL011C_mRNA">
    <property type="protein sequence ID" value="YCL011C"/>
    <property type="gene ID" value="YCL011C"/>
</dbReference>
<dbReference type="GeneID" id="850346"/>
<dbReference type="KEGG" id="sce:YCL011C"/>
<dbReference type="AGR" id="SGD:S000000517"/>
<dbReference type="SGD" id="S000000517">
    <property type="gene designation" value="GBP2"/>
</dbReference>
<dbReference type="VEuPathDB" id="FungiDB:YCL011C"/>
<dbReference type="eggNOG" id="KOG0118">
    <property type="taxonomic scope" value="Eukaryota"/>
</dbReference>
<dbReference type="GeneTree" id="ENSGT00940000168568"/>
<dbReference type="HOGENOM" id="CLU_026447_2_0_1"/>
<dbReference type="InParanoid" id="P25555"/>
<dbReference type="OMA" id="YNQRRED"/>
<dbReference type="OrthoDB" id="1049195at2759"/>
<dbReference type="BioCyc" id="YEAST:G3O-29280-MONOMER"/>
<dbReference type="BioGRID-ORCS" id="850346">
    <property type="hits" value="9 hits in 10 CRISPR screens"/>
</dbReference>
<dbReference type="CD-CODE" id="A777E0F8">
    <property type="entry name" value="P-body"/>
</dbReference>
<dbReference type="CD-CODE" id="E03F929F">
    <property type="entry name" value="Stress granule"/>
</dbReference>
<dbReference type="EvolutionaryTrace" id="P25555"/>
<dbReference type="PRO" id="PR:P25555"/>
<dbReference type="Proteomes" id="UP000002311">
    <property type="component" value="Chromosome III"/>
</dbReference>
<dbReference type="RNAct" id="P25555">
    <property type="molecule type" value="protein"/>
</dbReference>
<dbReference type="GO" id="GO:0000781">
    <property type="term" value="C:chromosome, telomeric region"/>
    <property type="evidence" value="ECO:0007669"/>
    <property type="project" value="UniProtKB-SubCell"/>
</dbReference>
<dbReference type="GO" id="GO:0005737">
    <property type="term" value="C:cytoplasm"/>
    <property type="evidence" value="ECO:0000318"/>
    <property type="project" value="GO_Central"/>
</dbReference>
<dbReference type="GO" id="GO:0010494">
    <property type="term" value="C:cytoplasmic stress granule"/>
    <property type="evidence" value="ECO:0000314"/>
    <property type="project" value="SGD"/>
</dbReference>
<dbReference type="GO" id="GO:0005829">
    <property type="term" value="C:cytosol"/>
    <property type="evidence" value="ECO:0000314"/>
    <property type="project" value="SGD"/>
</dbReference>
<dbReference type="GO" id="GO:0005634">
    <property type="term" value="C:nucleus"/>
    <property type="evidence" value="ECO:0000314"/>
    <property type="project" value="SGD"/>
</dbReference>
<dbReference type="GO" id="GO:0000932">
    <property type="term" value="C:P-body"/>
    <property type="evidence" value="ECO:0007669"/>
    <property type="project" value="UniProtKB-SubCell"/>
</dbReference>
<dbReference type="GO" id="GO:1990904">
    <property type="term" value="C:ribonucleoprotein complex"/>
    <property type="evidence" value="ECO:0000318"/>
    <property type="project" value="GO_Central"/>
</dbReference>
<dbReference type="GO" id="GO:0003682">
    <property type="term" value="F:chromatin binding"/>
    <property type="evidence" value="ECO:0000314"/>
    <property type="project" value="SGD"/>
</dbReference>
<dbReference type="GO" id="GO:0003729">
    <property type="term" value="F:mRNA binding"/>
    <property type="evidence" value="ECO:0000314"/>
    <property type="project" value="SGD"/>
</dbReference>
<dbReference type="GO" id="GO:0043047">
    <property type="term" value="F:single-stranded telomeric DNA binding"/>
    <property type="evidence" value="ECO:0000314"/>
    <property type="project" value="SGD"/>
</dbReference>
<dbReference type="GO" id="GO:0071028">
    <property type="term" value="P:nuclear mRNA surveillance"/>
    <property type="evidence" value="ECO:0000315"/>
    <property type="project" value="SGD"/>
</dbReference>
<dbReference type="GO" id="GO:0016973">
    <property type="term" value="P:poly(A)+ mRNA export from nucleus"/>
    <property type="evidence" value="ECO:0000315"/>
    <property type="project" value="SGD"/>
</dbReference>
<dbReference type="GO" id="GO:0000723">
    <property type="term" value="P:telomere maintenance"/>
    <property type="evidence" value="ECO:0000314"/>
    <property type="project" value="SGD"/>
</dbReference>
<dbReference type="CDD" id="cd21605">
    <property type="entry name" value="RRM1_HRB1_GBP2"/>
    <property type="match status" value="1"/>
</dbReference>
<dbReference type="CDD" id="cd21606">
    <property type="entry name" value="RRM2_HRB1_GBP2"/>
    <property type="match status" value="1"/>
</dbReference>
<dbReference type="CDD" id="cd21607">
    <property type="entry name" value="RRM3_HRB1_GBP2"/>
    <property type="match status" value="1"/>
</dbReference>
<dbReference type="FunFam" id="3.30.70.330:FF:000838">
    <property type="entry name" value="Gbp2p"/>
    <property type="match status" value="1"/>
</dbReference>
<dbReference type="FunFam" id="3.30.70.330:FF:000362">
    <property type="entry name" value="GBP2p Poly(A+) RNA-binding protein"/>
    <property type="match status" value="1"/>
</dbReference>
<dbReference type="FunFam" id="3.30.70.330:FF:000508">
    <property type="entry name" value="Protein HRB1"/>
    <property type="match status" value="1"/>
</dbReference>
<dbReference type="Gene3D" id="3.30.70.330">
    <property type="match status" value="3"/>
</dbReference>
<dbReference type="InterPro" id="IPR012677">
    <property type="entry name" value="Nucleotide-bd_a/b_plait_sf"/>
</dbReference>
<dbReference type="InterPro" id="IPR035979">
    <property type="entry name" value="RBD_domain_sf"/>
</dbReference>
<dbReference type="InterPro" id="IPR000504">
    <property type="entry name" value="RRM_dom"/>
</dbReference>
<dbReference type="InterPro" id="IPR050374">
    <property type="entry name" value="RRT5_SRSF_SR"/>
</dbReference>
<dbReference type="PANTHER" id="PTHR23003">
    <property type="entry name" value="RNA RECOGNITION MOTIF RRM DOMAIN CONTAINING PROTEIN"/>
    <property type="match status" value="1"/>
</dbReference>
<dbReference type="Pfam" id="PF00076">
    <property type="entry name" value="RRM_1"/>
    <property type="match status" value="3"/>
</dbReference>
<dbReference type="SMART" id="SM00360">
    <property type="entry name" value="RRM"/>
    <property type="match status" value="3"/>
</dbReference>
<dbReference type="SUPFAM" id="SSF54928">
    <property type="entry name" value="RNA-binding domain, RBD"/>
    <property type="match status" value="2"/>
</dbReference>
<dbReference type="PROSITE" id="PS50102">
    <property type="entry name" value="RRM"/>
    <property type="match status" value="3"/>
</dbReference>
<gene>
    <name evidence="18" type="primary">GBP2</name>
    <name evidence="17" type="synonym">RLF6</name>
    <name type="ordered locus">YCL011C</name>
    <name type="ORF">YCL11C</name>
</gene>
<keyword id="KW-0002">3D-structure</keyword>
<keyword id="KW-0158">Chromosome</keyword>
<keyword id="KW-0963">Cytoplasm</keyword>
<keyword id="KW-0238">DNA-binding</keyword>
<keyword id="KW-0539">Nucleus</keyword>
<keyword id="KW-0597">Phosphoprotein</keyword>
<keyword id="KW-1185">Reference proteome</keyword>
<keyword id="KW-0677">Repeat</keyword>
<keyword id="KW-0694">RNA-binding</keyword>
<keyword id="KW-0779">Telomere</keyword>
<comment type="function">
    <text evidence="3 7 10 13 14">Binds to intron-containing transcripts and is involved in quality control for the export of spliced mRNAs from the nucleus (PubMed:14769921, PubMed:24452287). Binds to pre-mRNAs until splicing is completed or until faulty mRNAs are degraded. On correctly spliced mRNAs, GBP2 and HRB1 recruit MEX67 to allow nuclear export. On faulty mRNAs, GBP2 and HRB1 associate with the TRAMP complex that guides those pre-mRNAs to the exosome for degradation (PubMed:24452287). Binds single-stranded telomeric sequences of the type (TG[1-3])n in vitro (PubMed:7800479). Influences the localization of RAP1 in the nuclei (PubMed:7777547). Involved in modulating telomere length (PubMed:12519786).</text>
</comment>
<comment type="interaction">
    <interactant intactId="EBI-7410">
        <id>P25555</id>
    </interactant>
    <interactant intactId="EBI-12114">
        <id>Q01560</id>
        <label>NPL3</label>
    </interactant>
    <organismsDiffer>false</organismsDiffer>
    <experiments>3</experiments>
</comment>
<comment type="interaction">
    <interactant intactId="EBI-7410">
        <id>P25555</id>
    </interactant>
    <interactant intactId="EBI-30898">
        <id>O13539</id>
        <label>THP2</label>
    </interactant>
    <organismsDiffer>false</organismsDiffer>
    <experiments>4</experiments>
</comment>
<comment type="subcellular location">
    <subcellularLocation>
        <location evidence="6 9 10">Cytoplasm</location>
    </subcellularLocation>
    <subcellularLocation>
        <location evidence="4 6 9 10">Nucleus</location>
    </subcellularLocation>
    <subcellularLocation>
        <location evidence="20">Chromosome</location>
        <location evidence="20">Telomere</location>
    </subcellularLocation>
    <subcellularLocation>
        <location evidence="8">Cytoplasm</location>
        <location evidence="8">P-body</location>
    </subcellularLocation>
    <subcellularLocation>
        <location evidence="8">Cytoplasm</location>
        <location evidence="8">Stress granule</location>
    </subcellularLocation>
    <text evidence="6 9">Nuclear at steady state. Export is dependent on active transcription and the export of mRNAs in general. Depends on MFT1 and HPR1 for nuclear export (PubMed:14676199). Becomes predominantly cytosolic after exposure to hypoxia (PubMed:22932476).</text>
</comment>
<comment type="domain">
    <text evidence="11">RRM 1 and RRM 2 recognize preferentially RNAs containing the core motif GGUG. The atypical C-terminal RRM domain (RRM 3) does not interact with RNA/DNA, but is crucial for interaction with the THO/TREX complex.</text>
</comment>
<comment type="PTM">
    <text evidence="15">Methylated by HMT1.</text>
</comment>
<comment type="miscellaneous">
    <text evidence="5">Present with 2540 molecules/cell in log phase SD medium.</text>
</comment>
<proteinExistence type="evidence at protein level"/>
<reference key="1">
    <citation type="journal article" date="1992" name="Nature">
        <title>The complete DNA sequence of yeast chromosome III.</title>
        <authorList>
            <person name="Oliver S.G."/>
            <person name="van der Aart Q.J.M."/>
            <person name="Agostoni-Carbone M.L."/>
            <person name="Aigle M."/>
            <person name="Alberghina L."/>
            <person name="Alexandraki D."/>
            <person name="Antoine G."/>
            <person name="Anwar R."/>
            <person name="Ballesta J.P.G."/>
            <person name="Benit P."/>
            <person name="Berben G."/>
            <person name="Bergantino E."/>
            <person name="Biteau N."/>
            <person name="Bolle P.-A."/>
            <person name="Bolotin-Fukuhara M."/>
            <person name="Brown A."/>
            <person name="Brown A.J.P."/>
            <person name="Buhler J.-M."/>
            <person name="Carcano C."/>
            <person name="Carignani G."/>
            <person name="Cederberg H."/>
            <person name="Chanet R."/>
            <person name="Contreras R."/>
            <person name="Crouzet M."/>
            <person name="Daignan-Fornier B."/>
            <person name="Defoor E."/>
            <person name="Delgado M.D."/>
            <person name="Demolder J."/>
            <person name="Doira C."/>
            <person name="Dubois E."/>
            <person name="Dujon B."/>
            <person name="Duesterhoeft A."/>
            <person name="Erdmann D."/>
            <person name="Esteban M."/>
            <person name="Fabre F."/>
            <person name="Fairhead C."/>
            <person name="Faye G."/>
            <person name="Feldmann H."/>
            <person name="Fiers W."/>
            <person name="Francingues-Gaillard M.-C."/>
            <person name="Franco L."/>
            <person name="Frontali L."/>
            <person name="Fukuhara H."/>
            <person name="Fuller L.J."/>
            <person name="Galland P."/>
            <person name="Gent M.E."/>
            <person name="Gigot D."/>
            <person name="Gilliquet V."/>
            <person name="Glansdorff N."/>
            <person name="Goffeau A."/>
            <person name="Grenson M."/>
            <person name="Grisanti P."/>
            <person name="Grivell L.A."/>
            <person name="de Haan M."/>
            <person name="Haasemann M."/>
            <person name="Hatat D."/>
            <person name="Hoenicka J."/>
            <person name="Hegemann J.H."/>
            <person name="Herbert C.J."/>
            <person name="Hilger F."/>
            <person name="Hohmann S."/>
            <person name="Hollenberg C.P."/>
            <person name="Huse K."/>
            <person name="Iborra F."/>
            <person name="Indge K.J."/>
            <person name="Isono K."/>
            <person name="Jacq C."/>
            <person name="Jacquet M."/>
            <person name="James C.M."/>
            <person name="Jauniaux J.-C."/>
            <person name="Jia Y."/>
            <person name="Jimenez A."/>
            <person name="Kelly A."/>
            <person name="Kleinhans U."/>
            <person name="Kreisl P."/>
            <person name="Lanfranchi G."/>
            <person name="Lewis C."/>
            <person name="van der Linden C.G."/>
            <person name="Lucchini G."/>
            <person name="Lutzenkirchen K."/>
            <person name="Maat M.J."/>
            <person name="Mallet L."/>
            <person name="Mannhaupt G."/>
            <person name="Martegani E."/>
            <person name="Mathieu A."/>
            <person name="Maurer C.T.C."/>
            <person name="McConnell D."/>
            <person name="McKee R.A."/>
            <person name="Messenguy F."/>
            <person name="Mewes H.-W."/>
            <person name="Molemans F."/>
            <person name="Montague M.A."/>
            <person name="Muzi Falconi M."/>
            <person name="Navas L."/>
            <person name="Newlon C.S."/>
            <person name="Noone D."/>
            <person name="Pallier C."/>
            <person name="Panzeri L."/>
            <person name="Pearson B.M."/>
            <person name="Perea J."/>
            <person name="Philippsen P."/>
            <person name="Pierard A."/>
            <person name="Planta R.J."/>
            <person name="Plevani P."/>
            <person name="Poetsch B."/>
            <person name="Pohl F.M."/>
            <person name="Purnelle B."/>
            <person name="Ramezani Rad M."/>
            <person name="Rasmussen S.W."/>
            <person name="Raynal A."/>
            <person name="Remacha M.A."/>
            <person name="Richterich P."/>
            <person name="Roberts A.B."/>
            <person name="Rodriguez F."/>
            <person name="Sanz E."/>
            <person name="Schaaff-Gerstenschlaeger I."/>
            <person name="Scherens B."/>
            <person name="Schweitzer B."/>
            <person name="Shu Y."/>
            <person name="Skala J."/>
            <person name="Slonimski P.P."/>
            <person name="Sor F."/>
            <person name="Soustelle C."/>
            <person name="Spiegelberg R."/>
            <person name="Stateva L.I."/>
            <person name="Steensma H.Y."/>
            <person name="Steiner S."/>
            <person name="Thierry A."/>
            <person name="Thireos G."/>
            <person name="Tzermia M."/>
            <person name="Urrestarazu L.A."/>
            <person name="Valle G."/>
            <person name="Vetter I."/>
            <person name="van Vliet-Reedijk J.C."/>
            <person name="Voet M."/>
            <person name="Volckaert G."/>
            <person name="Vreken P."/>
            <person name="Wang H."/>
            <person name="Warmington J.R."/>
            <person name="von Wettstein D."/>
            <person name="Wicksteed B.L."/>
            <person name="Wilson C."/>
            <person name="Wurst H."/>
            <person name="Xu G."/>
            <person name="Yoshikawa A."/>
            <person name="Zimmermann F.K."/>
            <person name="Sgouros J.G."/>
        </authorList>
    </citation>
    <scope>NUCLEOTIDE SEQUENCE [LARGE SCALE GENOMIC DNA]</scope>
    <source>
        <strain>ATCC 204508 / S288c</strain>
    </source>
</reference>
<reference key="2">
    <citation type="journal article" date="2014" name="G3 (Bethesda)">
        <title>The reference genome sequence of Saccharomyces cerevisiae: Then and now.</title>
        <authorList>
            <person name="Engel S.R."/>
            <person name="Dietrich F.S."/>
            <person name="Fisk D.G."/>
            <person name="Binkley G."/>
            <person name="Balakrishnan R."/>
            <person name="Costanzo M.C."/>
            <person name="Dwight S.S."/>
            <person name="Hitz B.C."/>
            <person name="Karra K."/>
            <person name="Nash R.S."/>
            <person name="Weng S."/>
            <person name="Wong E.D."/>
            <person name="Lloyd P."/>
            <person name="Skrzypek M.S."/>
            <person name="Miyasato S.R."/>
            <person name="Simison M."/>
            <person name="Cherry J.M."/>
        </authorList>
    </citation>
    <scope>GENOME REANNOTATION</scope>
    <source>
        <strain>ATCC 204508 / S288c</strain>
    </source>
</reference>
<reference key="3">
    <citation type="journal article" date="2007" name="Genome Res.">
        <title>Approaching a complete repository of sequence-verified protein-encoding clones for Saccharomyces cerevisiae.</title>
        <authorList>
            <person name="Hu Y."/>
            <person name="Rolfs A."/>
            <person name="Bhullar B."/>
            <person name="Murthy T.V.S."/>
            <person name="Zhu C."/>
            <person name="Berger M.F."/>
            <person name="Camargo A.A."/>
            <person name="Kelley F."/>
            <person name="McCarron S."/>
            <person name="Jepson D."/>
            <person name="Richardson A."/>
            <person name="Raphael J."/>
            <person name="Moreira D."/>
            <person name="Taycher E."/>
            <person name="Zuo D."/>
            <person name="Mohr S."/>
            <person name="Kane M.F."/>
            <person name="Williamson J."/>
            <person name="Simpson A.J.G."/>
            <person name="Bulyk M.L."/>
            <person name="Harlow E."/>
            <person name="Marsischky G."/>
            <person name="Kolodner R.D."/>
            <person name="LaBaer J."/>
        </authorList>
    </citation>
    <scope>NUCLEOTIDE SEQUENCE [GENOMIC DNA]</scope>
    <source>
        <strain>ATCC 204508 / S288c</strain>
    </source>
</reference>
<reference key="4">
    <citation type="journal article" date="1994" name="Nucleic Acids Res.">
        <title>Isolation and characterization of two Saccharomyces cerevisiae genes that encode proteins that bind to (TG1-3)n single strand telomeric DNA in vitro.</title>
        <authorList>
            <person name="Lin J.-J."/>
            <person name="Zakian V.A."/>
        </authorList>
    </citation>
    <scope>FUNCTION</scope>
</reference>
<reference key="5">
    <citation type="journal article" date="1995" name="Proc. Natl. Acad. Sci. U.S.A.">
        <title>A class of single-stranded telomeric DNA-binding proteins required for Rap1p localization in yeast nuclei.</title>
        <authorList>
            <person name="Konkel L.C."/>
            <person name="Enomoto S."/>
            <person name="Chamberlain E."/>
            <person name="McCune-Zierath P."/>
            <person name="Iyadurai S.J.P."/>
            <person name="Berman J."/>
        </authorList>
    </citation>
    <scope>FUNCTION</scope>
</reference>
<reference key="6">
    <citation type="journal article" date="1998" name="Genes Dev.">
        <title>Arginine methylation facilitates the nuclear export of hnRNP proteins.</title>
        <authorList>
            <person name="Shen E.C."/>
            <person name="Henry M.F."/>
            <person name="Weiss V.H."/>
            <person name="Valentini S.R."/>
            <person name="Silver P.A."/>
            <person name="Lee M.S."/>
        </authorList>
    </citation>
    <scope>METHYLATION BY HMT1</scope>
</reference>
<reference key="7">
    <citation type="journal article" date="2003" name="EMBO Rep.">
        <title>Identification of Gbp2 as a novel poly(A)+ RNA-binding protein involved in the cytoplasmic delivery of messenger RNAs in yeast.</title>
        <authorList>
            <person name="Windgassen M."/>
            <person name="Krebber H."/>
        </authorList>
    </citation>
    <scope>SUBCELLULAR LOCATION</scope>
</reference>
<reference key="8">
    <citation type="journal article" date="2003" name="J. Biol. Chem.">
        <title>Exposure of single-stranded telomeric DNA causes G2/M cell cycle arrest in Saccharomyces cerevisiae.</title>
        <authorList>
            <person name="Pang T.-L."/>
            <person name="Wang C.-Y."/>
            <person name="Hsu C.-L."/>
            <person name="Chen M.-Y."/>
            <person name="Lin J.-J."/>
        </authorList>
    </citation>
    <scope>FUNCTION</scope>
</reference>
<reference key="9">
    <citation type="journal article" date="2003" name="Nature">
        <title>Global analysis of protein expression in yeast.</title>
        <authorList>
            <person name="Ghaemmaghami S."/>
            <person name="Huh W.-K."/>
            <person name="Bower K."/>
            <person name="Howson R.W."/>
            <person name="Belle A."/>
            <person name="Dephoure N."/>
            <person name="O'Shea E.K."/>
            <person name="Weissman J.S."/>
        </authorList>
    </citation>
    <scope>LEVEL OF PROTEIN EXPRESSION [LARGE SCALE ANALYSIS]</scope>
</reference>
<reference key="10">
    <citation type="journal article" date="2004" name="J. Biol. Chem.">
        <title>Differential export requirements for shuttling serine/arginine-type mRNA-binding proteins.</title>
        <authorList>
            <person name="Haecker S."/>
            <person name="Krebber H."/>
        </authorList>
    </citation>
    <scope>SUBCELLULAR LOCATION</scope>
    <scope>MUTAGENESIS OF SER-15</scope>
</reference>
<reference key="11">
    <citation type="journal article" date="2004" name="Proc. Natl. Acad. Sci. U.S.A.">
        <title>Cotranscriptional recruitment of the serine-arginine-rich (SR)-like proteins Gbp2 and Hrb1 to nascent mRNA via the TREX complex.</title>
        <authorList>
            <person name="Hurt E."/>
            <person name="Luo M.J."/>
            <person name="Roether S."/>
            <person name="Reed R."/>
            <person name="Straesser K."/>
        </authorList>
    </citation>
    <scope>FUNCTION</scope>
</reference>
<reference key="12">
    <citation type="journal article" date="2008" name="J. Cell Biol.">
        <title>P bodies promote stress granule assembly in Saccharomyces cerevisiae.</title>
        <authorList>
            <person name="Buchan J.R."/>
            <person name="Muhlrad D."/>
            <person name="Parker R."/>
        </authorList>
    </citation>
    <scope>SUBCELLULAR LOCATION</scope>
</reference>
<reference key="13">
    <citation type="journal article" date="2008" name="Mol. Cell. Proteomics">
        <title>A multidimensional chromatography technology for in-depth phosphoproteome analysis.</title>
        <authorList>
            <person name="Albuquerque C.P."/>
            <person name="Smolka M.B."/>
            <person name="Payne S.H."/>
            <person name="Bafna V."/>
            <person name="Eng J."/>
            <person name="Zhou H."/>
        </authorList>
    </citation>
    <scope>PHOSPHORYLATION [LARGE SCALE ANALYSIS] AT THR-130</scope>
    <scope>IDENTIFICATION BY MASS SPECTROMETRY [LARGE SCALE ANALYSIS]</scope>
</reference>
<reference key="14">
    <citation type="journal article" date="2012" name="Cell Biosci.">
        <title>The nuclear localization of SWI/SNF proteins is subjected to oxygen regulation.</title>
        <authorList>
            <person name="Dastidar R.G."/>
            <person name="Hooda J."/>
            <person name="Shah A."/>
            <person name="Cao T.M."/>
            <person name="Henke R.M."/>
            <person name="Zhang L."/>
        </authorList>
    </citation>
    <scope>SUBCELLULAR LOCATION</scope>
</reference>
<reference key="15">
    <citation type="journal article" date="2014" name="Nat. Commun.">
        <title>Quality control of spliced mRNAs requires the shuttling SR proteins Gbp2 and Hrb1.</title>
        <authorList>
            <person name="Hackmann A."/>
            <person name="Wu H."/>
            <person name="Schneider U.M."/>
            <person name="Meyer K."/>
            <person name="Jung K."/>
            <person name="Krebber H."/>
        </authorList>
    </citation>
    <scope>FUNCTION</scope>
    <scope>SUBCELLULAR LOCATION</scope>
</reference>
<reference evidence="21" key="16">
    <citation type="journal article" date="2016" name="Nucleic Acids Res.">
        <title>Gbp2 interacts with THO/TREX through a novel type of RRM domain.</title>
        <authorList>
            <person name="Martinez-Lumbreras S."/>
            <person name="Taverniti V."/>
            <person name="Zorrilla S."/>
            <person name="Seraphin B."/>
            <person name="Perez-Canadillas J.M."/>
        </authorList>
    </citation>
    <scope>STRUCTURE BY NMR OF 329-427</scope>
    <scope>DOMAIN</scope>
</reference>
<reference key="17">
    <citation type="journal article" date="2021" name="J. Proteome Res.">
        <title>Discovery of arginine methylation, phosphorylation, and their co-occurrence in condensate-associated proteins in Saccharomyces cerevisiae.</title>
        <authorList>
            <person name="Hamey J.J."/>
            <person name="Nguyen A."/>
            <person name="Wilkins M.R."/>
        </authorList>
    </citation>
    <scope>PHOSPHORYLATION AT SER-24</scope>
</reference>
<accession>P25555</accession>
<accession>D6VR01</accession>
<organism>
    <name type="scientific">Saccharomyces cerevisiae (strain ATCC 204508 / S288c)</name>
    <name type="common">Baker's yeast</name>
    <dbReference type="NCBI Taxonomy" id="559292"/>
    <lineage>
        <taxon>Eukaryota</taxon>
        <taxon>Fungi</taxon>
        <taxon>Dikarya</taxon>
        <taxon>Ascomycota</taxon>
        <taxon>Saccharomycotina</taxon>
        <taxon>Saccharomycetes</taxon>
        <taxon>Saccharomycetales</taxon>
        <taxon>Saccharomycetaceae</taxon>
        <taxon>Saccharomyces</taxon>
    </lineage>
</organism>